<protein>
    <recommendedName>
        <fullName evidence="1">UPF0473 protein BALH_3970</fullName>
    </recommendedName>
</protein>
<dbReference type="EMBL" id="CP000485">
    <property type="protein sequence ID" value="ABK87191.1"/>
    <property type="status" value="ALT_INIT"/>
    <property type="molecule type" value="Genomic_DNA"/>
</dbReference>
<dbReference type="RefSeq" id="WP_000392247.1">
    <property type="nucleotide sequence ID" value="NC_008600.1"/>
</dbReference>
<dbReference type="KEGG" id="btl:BALH_3970"/>
<dbReference type="HOGENOM" id="CLU_146610_2_1_9"/>
<dbReference type="HAMAP" id="MF_01448">
    <property type="entry name" value="UPF0473"/>
    <property type="match status" value="1"/>
</dbReference>
<dbReference type="InterPro" id="IPR009711">
    <property type="entry name" value="UPF0473"/>
</dbReference>
<dbReference type="NCBIfam" id="NF010216">
    <property type="entry name" value="PRK13678.1-3"/>
    <property type="match status" value="1"/>
</dbReference>
<dbReference type="PANTHER" id="PTHR40066">
    <property type="entry name" value="UPF0473 PROTEIN CBO2561/CLC_2432"/>
    <property type="match status" value="1"/>
</dbReference>
<dbReference type="PANTHER" id="PTHR40066:SF1">
    <property type="entry name" value="UPF0473 PROTEIN CBO2561_CLC_2432"/>
    <property type="match status" value="1"/>
</dbReference>
<dbReference type="Pfam" id="PF06949">
    <property type="entry name" value="DUF1292"/>
    <property type="match status" value="1"/>
</dbReference>
<proteinExistence type="inferred from homology"/>
<reference key="1">
    <citation type="journal article" date="2007" name="J. Bacteriol.">
        <title>The complete genome sequence of Bacillus thuringiensis Al Hakam.</title>
        <authorList>
            <person name="Challacombe J.F."/>
            <person name="Altherr M.R."/>
            <person name="Xie G."/>
            <person name="Bhotika S.S."/>
            <person name="Brown N."/>
            <person name="Bruce D."/>
            <person name="Campbell C.S."/>
            <person name="Campbell M.L."/>
            <person name="Chen J."/>
            <person name="Chertkov O."/>
            <person name="Cleland C."/>
            <person name="Dimitrijevic M."/>
            <person name="Doggett N.A."/>
            <person name="Fawcett J.J."/>
            <person name="Glavina T."/>
            <person name="Goodwin L.A."/>
            <person name="Green L.D."/>
            <person name="Han C.S."/>
            <person name="Hill K.K."/>
            <person name="Hitchcock P."/>
            <person name="Jackson P.J."/>
            <person name="Keim P."/>
            <person name="Kewalramani A.R."/>
            <person name="Longmire J."/>
            <person name="Lucas S."/>
            <person name="Malfatti S."/>
            <person name="Martinez D."/>
            <person name="McMurry K."/>
            <person name="Meincke L.J."/>
            <person name="Misra M."/>
            <person name="Moseman B.L."/>
            <person name="Mundt M."/>
            <person name="Munk A.C."/>
            <person name="Okinaka R.T."/>
            <person name="Parson-Quintana B."/>
            <person name="Reilly L.P."/>
            <person name="Richardson P."/>
            <person name="Robinson D.L."/>
            <person name="Saunders E."/>
            <person name="Tapia R."/>
            <person name="Tesmer J.G."/>
            <person name="Thayer N."/>
            <person name="Thompson L.S."/>
            <person name="Tice H."/>
            <person name="Ticknor L.O."/>
            <person name="Wills P.L."/>
            <person name="Gilna P."/>
            <person name="Brettin T.S."/>
        </authorList>
    </citation>
    <scope>NUCLEOTIDE SEQUENCE [LARGE SCALE GENOMIC DNA]</scope>
    <source>
        <strain>Al Hakam</strain>
    </source>
</reference>
<organism>
    <name type="scientific">Bacillus thuringiensis (strain Al Hakam)</name>
    <dbReference type="NCBI Taxonomy" id="412694"/>
    <lineage>
        <taxon>Bacteria</taxon>
        <taxon>Bacillati</taxon>
        <taxon>Bacillota</taxon>
        <taxon>Bacilli</taxon>
        <taxon>Bacillales</taxon>
        <taxon>Bacillaceae</taxon>
        <taxon>Bacillus</taxon>
        <taxon>Bacillus cereus group</taxon>
    </lineage>
</organism>
<evidence type="ECO:0000255" key="1">
    <source>
        <dbReference type="HAMAP-Rule" id="MF_01448"/>
    </source>
</evidence>
<evidence type="ECO:0000305" key="2"/>
<accession>A0RIZ8</accession>
<name>Y3970_BACAH</name>
<sequence length="92" mass="10620">MEENQITIVDEKGNEHLCEIIFTFDAEKFGKKSYVVFSPIGEVDEDGDQIYDAMAYEQNEEEGGTLLPIESEEEWEMVQEMFNTLADEQEAE</sequence>
<gene>
    <name type="ordered locus">BALH_3970</name>
</gene>
<comment type="similarity">
    <text evidence="1">Belongs to the UPF0473 family.</text>
</comment>
<comment type="sequence caution" evidence="2">
    <conflict type="erroneous initiation">
        <sequence resource="EMBL-CDS" id="ABK87191"/>
    </conflict>
</comment>
<feature type="chain" id="PRO_0000304819" description="UPF0473 protein BALH_3970">
    <location>
        <begin position="1"/>
        <end position="92"/>
    </location>
</feature>